<dbReference type="EMBL" id="AF224494">
    <property type="protein sequence ID" value="AAF91234.1"/>
    <property type="molecule type" value="mRNA"/>
</dbReference>
<dbReference type="EMBL" id="AK146082">
    <property type="protein sequence ID" value="BAE26886.1"/>
    <property type="molecule type" value="mRNA"/>
</dbReference>
<dbReference type="EMBL" id="AK171245">
    <property type="protein sequence ID" value="BAE42338.1"/>
    <property type="molecule type" value="mRNA"/>
</dbReference>
<dbReference type="EMBL" id="BC058780">
    <property type="protein sequence ID" value="AAH58780.1"/>
    <property type="molecule type" value="mRNA"/>
</dbReference>
<dbReference type="CCDS" id="CCDS19812.1"/>
<dbReference type="RefSeq" id="NP_001153380.1">
    <property type="nucleotide sequence ID" value="NM_001159908.1"/>
</dbReference>
<dbReference type="RefSeq" id="NP_579927.1">
    <property type="nucleotide sequence ID" value="NM_133349.3"/>
</dbReference>
<dbReference type="SMR" id="Q9JII7"/>
<dbReference type="BioGRID" id="221462">
    <property type="interactions" value="7"/>
</dbReference>
<dbReference type="DIP" id="DIP-46092N"/>
<dbReference type="FunCoup" id="Q9JII7">
    <property type="interactions" value="483"/>
</dbReference>
<dbReference type="IntAct" id="Q9JII7">
    <property type="interactions" value="2"/>
</dbReference>
<dbReference type="STRING" id="10090.ENSMUSP00000078910"/>
<dbReference type="PhosphoSitePlus" id="Q9JII7"/>
<dbReference type="PaxDb" id="10090-ENSMUSP00000078910"/>
<dbReference type="ProteomicsDB" id="302126"/>
<dbReference type="Antibodypedia" id="10898">
    <property type="antibodies" value="95 antibodies from 17 providers"/>
</dbReference>
<dbReference type="Ensembl" id="ENSMUST00000079996.13">
    <property type="protein sequence ID" value="ENSMUSP00000078910.7"/>
    <property type="gene ID" value="ENSMUSG00000053581.14"/>
</dbReference>
<dbReference type="Ensembl" id="ENSMUST00000110851.8">
    <property type="protein sequence ID" value="ENSMUSP00000106475.2"/>
    <property type="gene ID" value="ENSMUSG00000053581.14"/>
</dbReference>
<dbReference type="GeneID" id="100494"/>
<dbReference type="KEGG" id="mmu:100494"/>
<dbReference type="UCSC" id="uc009ags.2">
    <property type="organism name" value="mouse"/>
</dbReference>
<dbReference type="AGR" id="MGI:2140729"/>
<dbReference type="CTD" id="90637"/>
<dbReference type="MGI" id="MGI:2140729">
    <property type="gene designation" value="Zfand2a"/>
</dbReference>
<dbReference type="VEuPathDB" id="HostDB:ENSMUSG00000053581"/>
<dbReference type="eggNOG" id="KOG3183">
    <property type="taxonomic scope" value="Eukaryota"/>
</dbReference>
<dbReference type="GeneTree" id="ENSGT00940000161571"/>
<dbReference type="HOGENOM" id="CLU_061621_3_0_1"/>
<dbReference type="InParanoid" id="Q9JII7"/>
<dbReference type="OMA" id="HACPFAG"/>
<dbReference type="OrthoDB" id="431929at2759"/>
<dbReference type="PhylomeDB" id="Q9JII7"/>
<dbReference type="TreeFam" id="TF314219"/>
<dbReference type="BioGRID-ORCS" id="100494">
    <property type="hits" value="5 hits in 77 CRISPR screens"/>
</dbReference>
<dbReference type="ChiTaRS" id="Zfand2a">
    <property type="organism name" value="mouse"/>
</dbReference>
<dbReference type="PRO" id="PR:Q9JII7"/>
<dbReference type="Proteomes" id="UP000000589">
    <property type="component" value="Chromosome 5"/>
</dbReference>
<dbReference type="RNAct" id="Q9JII7">
    <property type="molecule type" value="protein"/>
</dbReference>
<dbReference type="Bgee" id="ENSMUSG00000053581">
    <property type="expression patterns" value="Expressed in cleaving embryo and 255 other cell types or tissues"/>
</dbReference>
<dbReference type="ExpressionAtlas" id="Q9JII7">
    <property type="expression patterns" value="baseline and differential"/>
</dbReference>
<dbReference type="GO" id="GO:0005737">
    <property type="term" value="C:cytoplasm"/>
    <property type="evidence" value="ECO:0007669"/>
    <property type="project" value="UniProtKB-SubCell"/>
</dbReference>
<dbReference type="GO" id="GO:0005634">
    <property type="term" value="C:nucleus"/>
    <property type="evidence" value="ECO:0007669"/>
    <property type="project" value="UniProtKB-SubCell"/>
</dbReference>
<dbReference type="GO" id="GO:0000502">
    <property type="term" value="C:proteasome complex"/>
    <property type="evidence" value="ECO:0000314"/>
    <property type="project" value="MGI"/>
</dbReference>
<dbReference type="GO" id="GO:0008270">
    <property type="term" value="F:zinc ion binding"/>
    <property type="evidence" value="ECO:0007669"/>
    <property type="project" value="UniProtKB-KW"/>
</dbReference>
<dbReference type="GO" id="GO:0071243">
    <property type="term" value="P:cellular response to arsenic-containing substance"/>
    <property type="evidence" value="ECO:0000315"/>
    <property type="project" value="MGI"/>
</dbReference>
<dbReference type="GO" id="GO:0032436">
    <property type="term" value="P:positive regulation of proteasomal ubiquitin-dependent protein catabolic process"/>
    <property type="evidence" value="ECO:0000315"/>
    <property type="project" value="MGI"/>
</dbReference>
<dbReference type="FunFam" id="4.10.1110.10:FF:000003">
    <property type="entry name" value="AN1-type zinc finger protein 2B isoform X1"/>
    <property type="match status" value="1"/>
</dbReference>
<dbReference type="FunFam" id="4.10.1110.10:FF:000004">
    <property type="entry name" value="AN1-type zinc finger protein 2B isoform X1"/>
    <property type="match status" value="1"/>
</dbReference>
<dbReference type="Gene3D" id="4.10.1110.10">
    <property type="entry name" value="AN1-like Zinc finger"/>
    <property type="match status" value="2"/>
</dbReference>
<dbReference type="InterPro" id="IPR035896">
    <property type="entry name" value="AN1-like_Znf"/>
</dbReference>
<dbReference type="InterPro" id="IPR000058">
    <property type="entry name" value="Znf_AN1"/>
</dbReference>
<dbReference type="PANTHER" id="PTHR14677:SF11">
    <property type="entry name" value="AN1-TYPE ZINC FINGER PROTEIN 2A"/>
    <property type="match status" value="1"/>
</dbReference>
<dbReference type="PANTHER" id="PTHR14677">
    <property type="entry name" value="ARSENITE INDUCUBLE RNA ASSOCIATED PROTEIN AIP-1-RELATED"/>
    <property type="match status" value="1"/>
</dbReference>
<dbReference type="Pfam" id="PF01428">
    <property type="entry name" value="zf-AN1"/>
    <property type="match status" value="2"/>
</dbReference>
<dbReference type="Pfam" id="PF25403">
    <property type="entry name" value="zf-C2H2_ZFAND2"/>
    <property type="match status" value="1"/>
</dbReference>
<dbReference type="SMART" id="SM00154">
    <property type="entry name" value="ZnF_AN1"/>
    <property type="match status" value="2"/>
</dbReference>
<dbReference type="SUPFAM" id="SSF118310">
    <property type="entry name" value="AN1-like Zinc finger"/>
    <property type="match status" value="2"/>
</dbReference>
<dbReference type="PROSITE" id="PS51039">
    <property type="entry name" value="ZF_AN1"/>
    <property type="match status" value="2"/>
</dbReference>
<protein>
    <recommendedName>
        <fullName>AN1-type zinc finger protein 2A</fullName>
    </recommendedName>
    <alternativeName>
        <fullName>Arsenite-inducible RNA-associated protein</fullName>
    </alternativeName>
</protein>
<gene>
    <name type="primary">Zfand2a</name>
    <name type="synonym">Airap</name>
</gene>
<proteinExistence type="evidence at transcript level"/>
<evidence type="ECO:0000255" key="1">
    <source>
        <dbReference type="PROSITE-ProRule" id="PRU00449"/>
    </source>
</evidence>
<evidence type="ECO:0000256" key="2">
    <source>
        <dbReference type="SAM" id="MobiDB-lite"/>
    </source>
</evidence>
<evidence type="ECO:0000269" key="3">
    <source>
    </source>
</evidence>
<reference key="1">
    <citation type="journal article" date="2001" name="Cell Stress Chaperones">
        <title>Arsenite-inducible RNA-associated protein (AIRAP) protects cells from arsenite toxicity.</title>
        <authorList>
            <person name="Sok J."/>
            <person name="Calfon M."/>
            <person name="Lu J."/>
            <person name="Lichtlen P."/>
            <person name="Clark S.G."/>
            <person name="Ron D."/>
        </authorList>
    </citation>
    <scope>NUCLEOTIDE SEQUENCE [MRNA]</scope>
    <scope>SUBCELLULAR LOCATION</scope>
</reference>
<reference key="2">
    <citation type="journal article" date="2005" name="Science">
        <title>The transcriptional landscape of the mammalian genome.</title>
        <authorList>
            <person name="Carninci P."/>
            <person name="Kasukawa T."/>
            <person name="Katayama S."/>
            <person name="Gough J."/>
            <person name="Frith M.C."/>
            <person name="Maeda N."/>
            <person name="Oyama R."/>
            <person name="Ravasi T."/>
            <person name="Lenhard B."/>
            <person name="Wells C."/>
            <person name="Kodzius R."/>
            <person name="Shimokawa K."/>
            <person name="Bajic V.B."/>
            <person name="Brenner S.E."/>
            <person name="Batalov S."/>
            <person name="Forrest A.R."/>
            <person name="Zavolan M."/>
            <person name="Davis M.J."/>
            <person name="Wilming L.G."/>
            <person name="Aidinis V."/>
            <person name="Allen J.E."/>
            <person name="Ambesi-Impiombato A."/>
            <person name="Apweiler R."/>
            <person name="Aturaliya R.N."/>
            <person name="Bailey T.L."/>
            <person name="Bansal M."/>
            <person name="Baxter L."/>
            <person name="Beisel K.W."/>
            <person name="Bersano T."/>
            <person name="Bono H."/>
            <person name="Chalk A.M."/>
            <person name="Chiu K.P."/>
            <person name="Choudhary V."/>
            <person name="Christoffels A."/>
            <person name="Clutterbuck D.R."/>
            <person name="Crowe M.L."/>
            <person name="Dalla E."/>
            <person name="Dalrymple B.P."/>
            <person name="de Bono B."/>
            <person name="Della Gatta G."/>
            <person name="di Bernardo D."/>
            <person name="Down T."/>
            <person name="Engstrom P."/>
            <person name="Fagiolini M."/>
            <person name="Faulkner G."/>
            <person name="Fletcher C.F."/>
            <person name="Fukushima T."/>
            <person name="Furuno M."/>
            <person name="Futaki S."/>
            <person name="Gariboldi M."/>
            <person name="Georgii-Hemming P."/>
            <person name="Gingeras T.R."/>
            <person name="Gojobori T."/>
            <person name="Green R.E."/>
            <person name="Gustincich S."/>
            <person name="Harbers M."/>
            <person name="Hayashi Y."/>
            <person name="Hensch T.K."/>
            <person name="Hirokawa N."/>
            <person name="Hill D."/>
            <person name="Huminiecki L."/>
            <person name="Iacono M."/>
            <person name="Ikeo K."/>
            <person name="Iwama A."/>
            <person name="Ishikawa T."/>
            <person name="Jakt M."/>
            <person name="Kanapin A."/>
            <person name="Katoh M."/>
            <person name="Kawasawa Y."/>
            <person name="Kelso J."/>
            <person name="Kitamura H."/>
            <person name="Kitano H."/>
            <person name="Kollias G."/>
            <person name="Krishnan S.P."/>
            <person name="Kruger A."/>
            <person name="Kummerfeld S.K."/>
            <person name="Kurochkin I.V."/>
            <person name="Lareau L.F."/>
            <person name="Lazarevic D."/>
            <person name="Lipovich L."/>
            <person name="Liu J."/>
            <person name="Liuni S."/>
            <person name="McWilliam S."/>
            <person name="Madan Babu M."/>
            <person name="Madera M."/>
            <person name="Marchionni L."/>
            <person name="Matsuda H."/>
            <person name="Matsuzawa S."/>
            <person name="Miki H."/>
            <person name="Mignone F."/>
            <person name="Miyake S."/>
            <person name="Morris K."/>
            <person name="Mottagui-Tabar S."/>
            <person name="Mulder N."/>
            <person name="Nakano N."/>
            <person name="Nakauchi H."/>
            <person name="Ng P."/>
            <person name="Nilsson R."/>
            <person name="Nishiguchi S."/>
            <person name="Nishikawa S."/>
            <person name="Nori F."/>
            <person name="Ohara O."/>
            <person name="Okazaki Y."/>
            <person name="Orlando V."/>
            <person name="Pang K.C."/>
            <person name="Pavan W.J."/>
            <person name="Pavesi G."/>
            <person name="Pesole G."/>
            <person name="Petrovsky N."/>
            <person name="Piazza S."/>
            <person name="Reed J."/>
            <person name="Reid J.F."/>
            <person name="Ring B.Z."/>
            <person name="Ringwald M."/>
            <person name="Rost B."/>
            <person name="Ruan Y."/>
            <person name="Salzberg S.L."/>
            <person name="Sandelin A."/>
            <person name="Schneider C."/>
            <person name="Schoenbach C."/>
            <person name="Sekiguchi K."/>
            <person name="Semple C.A."/>
            <person name="Seno S."/>
            <person name="Sessa L."/>
            <person name="Sheng Y."/>
            <person name="Shibata Y."/>
            <person name="Shimada H."/>
            <person name="Shimada K."/>
            <person name="Silva D."/>
            <person name="Sinclair B."/>
            <person name="Sperling S."/>
            <person name="Stupka E."/>
            <person name="Sugiura K."/>
            <person name="Sultana R."/>
            <person name="Takenaka Y."/>
            <person name="Taki K."/>
            <person name="Tammoja K."/>
            <person name="Tan S.L."/>
            <person name="Tang S."/>
            <person name="Taylor M.S."/>
            <person name="Tegner J."/>
            <person name="Teichmann S.A."/>
            <person name="Ueda H.R."/>
            <person name="van Nimwegen E."/>
            <person name="Verardo R."/>
            <person name="Wei C.L."/>
            <person name="Yagi K."/>
            <person name="Yamanishi H."/>
            <person name="Zabarovsky E."/>
            <person name="Zhu S."/>
            <person name="Zimmer A."/>
            <person name="Hide W."/>
            <person name="Bult C."/>
            <person name="Grimmond S.M."/>
            <person name="Teasdale R.D."/>
            <person name="Liu E.T."/>
            <person name="Brusic V."/>
            <person name="Quackenbush J."/>
            <person name="Wahlestedt C."/>
            <person name="Mattick J.S."/>
            <person name="Hume D.A."/>
            <person name="Kai C."/>
            <person name="Sasaki D."/>
            <person name="Tomaru Y."/>
            <person name="Fukuda S."/>
            <person name="Kanamori-Katayama M."/>
            <person name="Suzuki M."/>
            <person name="Aoki J."/>
            <person name="Arakawa T."/>
            <person name="Iida J."/>
            <person name="Imamura K."/>
            <person name="Itoh M."/>
            <person name="Kato T."/>
            <person name="Kawaji H."/>
            <person name="Kawagashira N."/>
            <person name="Kawashima T."/>
            <person name="Kojima M."/>
            <person name="Kondo S."/>
            <person name="Konno H."/>
            <person name="Nakano K."/>
            <person name="Ninomiya N."/>
            <person name="Nishio T."/>
            <person name="Okada M."/>
            <person name="Plessy C."/>
            <person name="Shibata K."/>
            <person name="Shiraki T."/>
            <person name="Suzuki S."/>
            <person name="Tagami M."/>
            <person name="Waki K."/>
            <person name="Watahiki A."/>
            <person name="Okamura-Oho Y."/>
            <person name="Suzuki H."/>
            <person name="Kawai J."/>
            <person name="Hayashizaki Y."/>
        </authorList>
    </citation>
    <scope>NUCLEOTIDE SEQUENCE [LARGE SCALE MRNA]</scope>
    <source>
        <strain>C57BL/6J</strain>
        <strain>NOD</strain>
        <tissue>Placenta</tissue>
    </source>
</reference>
<reference key="3">
    <citation type="journal article" date="2004" name="Genome Res.">
        <title>The status, quality, and expansion of the NIH full-length cDNA project: the Mammalian Gene Collection (MGC).</title>
        <authorList>
            <consortium name="The MGC Project Team"/>
        </authorList>
    </citation>
    <scope>NUCLEOTIDE SEQUENCE [LARGE SCALE MRNA]</scope>
    <source>
        <tissue>Olfactory epithelium</tissue>
    </source>
</reference>
<accession>Q9JII7</accession>
<organism>
    <name type="scientific">Mus musculus</name>
    <name type="common">Mouse</name>
    <dbReference type="NCBI Taxonomy" id="10090"/>
    <lineage>
        <taxon>Eukaryota</taxon>
        <taxon>Metazoa</taxon>
        <taxon>Chordata</taxon>
        <taxon>Craniata</taxon>
        <taxon>Vertebrata</taxon>
        <taxon>Euteleostomi</taxon>
        <taxon>Mammalia</taxon>
        <taxon>Eutheria</taxon>
        <taxon>Euarchontoglires</taxon>
        <taxon>Glires</taxon>
        <taxon>Rodentia</taxon>
        <taxon>Myomorpha</taxon>
        <taxon>Muroidea</taxon>
        <taxon>Muridae</taxon>
        <taxon>Murinae</taxon>
        <taxon>Mus</taxon>
        <taxon>Mus</taxon>
    </lineage>
</organism>
<sequence length="171" mass="19281">MEFPDLGKHCSEPTCKQLDFLPITCDACKQDFCKDHFSYVGHKCPFAFKKDVQVPVCPLCNAPIPVKRGEIPDVVVGEHMDRDCTFHPGRNRNKVFTHRCSKEGCRKKEMLQLACAQCHGNFCIQHRHPLDHNCQAGSSSASRGRTSTSRAAEQKPSGVSWLAQRLRRTVK</sequence>
<feature type="chain" id="PRO_0000269889" description="AN1-type zinc finger protein 2A">
    <location>
        <begin position="1"/>
        <end position="171"/>
    </location>
</feature>
<feature type="zinc finger region" description="AN1-type 1" evidence="1">
    <location>
        <begin position="4"/>
        <end position="52"/>
    </location>
</feature>
<feature type="zinc finger region" description="AN1-type 2" evidence="1">
    <location>
        <begin position="94"/>
        <end position="142"/>
    </location>
</feature>
<feature type="region of interest" description="Disordered" evidence="2">
    <location>
        <begin position="134"/>
        <end position="171"/>
    </location>
</feature>
<feature type="compositionally biased region" description="Low complexity" evidence="2">
    <location>
        <begin position="136"/>
        <end position="151"/>
    </location>
</feature>
<feature type="binding site" evidence="1">
    <location>
        <position position="10"/>
    </location>
    <ligand>
        <name>Zn(2+)</name>
        <dbReference type="ChEBI" id="CHEBI:29105"/>
        <label>1</label>
    </ligand>
</feature>
<feature type="binding site" evidence="1">
    <location>
        <position position="15"/>
    </location>
    <ligand>
        <name>Zn(2+)</name>
        <dbReference type="ChEBI" id="CHEBI:29105"/>
        <label>1</label>
    </ligand>
</feature>
<feature type="binding site" evidence="1">
    <location>
        <position position="25"/>
    </location>
    <ligand>
        <name>Zn(2+)</name>
        <dbReference type="ChEBI" id="CHEBI:29105"/>
        <label>2</label>
    </ligand>
</feature>
<feature type="binding site" evidence="1">
    <location>
        <position position="28"/>
    </location>
    <ligand>
        <name>Zn(2+)</name>
        <dbReference type="ChEBI" id="CHEBI:29105"/>
        <label>2</label>
    </ligand>
</feature>
<feature type="binding site" evidence="1">
    <location>
        <position position="33"/>
    </location>
    <ligand>
        <name>Zn(2+)</name>
        <dbReference type="ChEBI" id="CHEBI:29105"/>
        <label>1</label>
    </ligand>
</feature>
<feature type="binding site" evidence="1">
    <location>
        <position position="36"/>
    </location>
    <ligand>
        <name>Zn(2+)</name>
        <dbReference type="ChEBI" id="CHEBI:29105"/>
        <label>1</label>
    </ligand>
</feature>
<feature type="binding site" evidence="1">
    <location>
        <position position="42"/>
    </location>
    <ligand>
        <name>Zn(2+)</name>
        <dbReference type="ChEBI" id="CHEBI:29105"/>
        <label>2</label>
    </ligand>
</feature>
<feature type="binding site" evidence="1">
    <location>
        <position position="44"/>
    </location>
    <ligand>
        <name>Zn(2+)</name>
        <dbReference type="ChEBI" id="CHEBI:29105"/>
        <label>2</label>
    </ligand>
</feature>
<feature type="binding site" evidence="1">
    <location>
        <position position="100"/>
    </location>
    <ligand>
        <name>Zn(2+)</name>
        <dbReference type="ChEBI" id="CHEBI:29105"/>
        <label>3</label>
    </ligand>
</feature>
<feature type="binding site" evidence="1">
    <location>
        <position position="105"/>
    </location>
    <ligand>
        <name>Zn(2+)</name>
        <dbReference type="ChEBI" id="CHEBI:29105"/>
        <label>3</label>
    </ligand>
</feature>
<feature type="binding site" evidence="1">
    <location>
        <position position="115"/>
    </location>
    <ligand>
        <name>Zn(2+)</name>
        <dbReference type="ChEBI" id="CHEBI:29105"/>
        <label>4</label>
    </ligand>
</feature>
<feature type="binding site" evidence="1">
    <location>
        <position position="118"/>
    </location>
    <ligand>
        <name>Zn(2+)</name>
        <dbReference type="ChEBI" id="CHEBI:29105"/>
        <label>4</label>
    </ligand>
</feature>
<feature type="binding site" evidence="1">
    <location>
        <position position="123"/>
    </location>
    <ligand>
        <name>Zn(2+)</name>
        <dbReference type="ChEBI" id="CHEBI:29105"/>
        <label>3</label>
    </ligand>
</feature>
<feature type="binding site" evidence="1">
    <location>
        <position position="126"/>
    </location>
    <ligand>
        <name>Zn(2+)</name>
        <dbReference type="ChEBI" id="CHEBI:29105"/>
        <label>3</label>
    </ligand>
</feature>
<feature type="binding site" evidence="1">
    <location>
        <position position="132"/>
    </location>
    <ligand>
        <name>Zn(2+)</name>
        <dbReference type="ChEBI" id="CHEBI:29105"/>
        <label>4</label>
    </ligand>
</feature>
<feature type="binding site" evidence="1">
    <location>
        <position position="134"/>
    </location>
    <ligand>
        <name>Zn(2+)</name>
        <dbReference type="ChEBI" id="CHEBI:29105"/>
        <label>4</label>
    </ligand>
</feature>
<keyword id="KW-0963">Cytoplasm</keyword>
<keyword id="KW-0479">Metal-binding</keyword>
<keyword id="KW-0539">Nucleus</keyword>
<keyword id="KW-1185">Reference proteome</keyword>
<keyword id="KW-0677">Repeat</keyword>
<keyword id="KW-0862">Zinc</keyword>
<keyword id="KW-0863">Zinc-finger</keyword>
<comment type="subcellular location">
    <subcellularLocation>
        <location evidence="3">Cytoplasm</location>
    </subcellularLocation>
    <subcellularLocation>
        <location evidence="3">Nucleus</location>
    </subcellularLocation>
</comment>
<name>ZFN2A_MOUSE</name>